<feature type="signal peptide" evidence="2">
    <location>
        <begin position="1"/>
        <end position="18"/>
    </location>
</feature>
<feature type="propeptide" id="PRO_0000028243" description="Activation peptide">
    <location>
        <begin position="19"/>
        <end position="47"/>
    </location>
</feature>
<feature type="chain" id="PRO_0000028244" description="Trypsin-1">
    <location>
        <begin position="48"/>
        <end position="274"/>
    </location>
</feature>
<feature type="domain" description="Peptidase S1" evidence="3">
    <location>
        <begin position="48"/>
        <end position="273"/>
    </location>
</feature>
<feature type="active site" description="Charge relay system" evidence="1">
    <location>
        <position position="88"/>
    </location>
</feature>
<feature type="active site" description="Charge relay system" evidence="1">
    <location>
        <position position="133"/>
    </location>
</feature>
<feature type="active site" description="Charge relay system" evidence="1">
    <location>
        <position position="229"/>
    </location>
</feature>
<feature type="site" description="Required for specificity" evidence="1">
    <location>
        <position position="223"/>
    </location>
</feature>
<feature type="disulfide bond" evidence="3">
    <location>
        <begin position="73"/>
        <end position="89"/>
    </location>
</feature>
<feature type="disulfide bond" evidence="3">
    <location>
        <begin position="198"/>
        <end position="214"/>
    </location>
</feature>
<feature type="disulfide bond" evidence="3">
    <location>
        <begin position="225"/>
        <end position="249"/>
    </location>
</feature>
<feature type="sequence conflict" description="In Ref. 1; CAA79327." evidence="6" ref="1">
    <original>A</original>
    <variation>R</variation>
    <location>
        <position position="93"/>
    </location>
</feature>
<feature type="sequence conflict" description="In Ref. 1; CAA79327 and 2; CAA80512." evidence="6" ref="1 2">
    <original>P</original>
    <variation>T</variation>
    <location>
        <position position="95"/>
    </location>
</feature>
<feature type="sequence conflict" description="In Ref. 1; CAA79327." evidence="6" ref="1">
    <original>R</original>
    <variation>P</variation>
    <location>
        <position position="101"/>
    </location>
</feature>
<feature type="sequence conflict" description="In Ref. 2; CAA80512." evidence="6" ref="2">
    <original>S</original>
    <variation>A</variation>
    <location>
        <position position="148"/>
    </location>
</feature>
<feature type="sequence conflict" description="In Ref. 1; CAA79327 and 2; CAA80512." evidence="6" ref="1 2">
    <original>E</original>
    <variation>D</variation>
    <location>
        <position position="204"/>
    </location>
</feature>
<dbReference type="EC" id="3.4.21.4"/>
<dbReference type="EMBL" id="Z18889">
    <property type="protein sequence ID" value="CAA79327.1"/>
    <property type="molecule type" value="mRNA"/>
</dbReference>
<dbReference type="EMBL" id="Z22930">
    <property type="protein sequence ID" value="CAA80512.1"/>
    <property type="molecule type" value="Genomic_DNA"/>
</dbReference>
<dbReference type="EMBL" id="AAAB01008964">
    <property type="protein sequence ID" value="EAA12590.3"/>
    <property type="molecule type" value="Genomic_DNA"/>
</dbReference>
<dbReference type="PIR" id="S35339">
    <property type="entry name" value="S35339"/>
</dbReference>
<dbReference type="RefSeq" id="XP_317170.2">
    <property type="nucleotide sequence ID" value="XM_317170.2"/>
</dbReference>
<dbReference type="SMR" id="P35035"/>
<dbReference type="FunCoup" id="P35035">
    <property type="interactions" value="55"/>
</dbReference>
<dbReference type="STRING" id="7165.P35035"/>
<dbReference type="MEROPS" id="S01.130"/>
<dbReference type="PaxDb" id="7165-AGAP008296-PA"/>
<dbReference type="EnsemblMetazoa" id="AGAP008296-RA">
    <property type="protein sequence ID" value="AGAP008296-PA"/>
    <property type="gene ID" value="AGAP008296"/>
</dbReference>
<dbReference type="GeneID" id="1277688"/>
<dbReference type="KEGG" id="aga:1277688"/>
<dbReference type="VEuPathDB" id="VectorBase:AGAMI1_001361"/>
<dbReference type="VEuPathDB" id="VectorBase:AGAP008296"/>
<dbReference type="eggNOG" id="KOG3627">
    <property type="taxonomic scope" value="Eukaryota"/>
</dbReference>
<dbReference type="HOGENOM" id="CLU_006842_7_0_1"/>
<dbReference type="InParanoid" id="P35035"/>
<dbReference type="OMA" id="YNANTIT"/>
<dbReference type="OrthoDB" id="6432550at2759"/>
<dbReference type="PhylomeDB" id="P35035"/>
<dbReference type="Proteomes" id="UP000007062">
    <property type="component" value="Chromosome 3R"/>
</dbReference>
<dbReference type="GO" id="GO:0005576">
    <property type="term" value="C:extracellular region"/>
    <property type="evidence" value="ECO:0007669"/>
    <property type="project" value="UniProtKB-SubCell"/>
</dbReference>
<dbReference type="GO" id="GO:0004252">
    <property type="term" value="F:serine-type endopeptidase activity"/>
    <property type="evidence" value="ECO:0000318"/>
    <property type="project" value="GO_Central"/>
</dbReference>
<dbReference type="GO" id="GO:0007586">
    <property type="term" value="P:digestion"/>
    <property type="evidence" value="ECO:0007669"/>
    <property type="project" value="UniProtKB-KW"/>
</dbReference>
<dbReference type="GO" id="GO:0006508">
    <property type="term" value="P:proteolysis"/>
    <property type="evidence" value="ECO:0007669"/>
    <property type="project" value="UniProtKB-KW"/>
</dbReference>
<dbReference type="CDD" id="cd00190">
    <property type="entry name" value="Tryp_SPc"/>
    <property type="match status" value="1"/>
</dbReference>
<dbReference type="FunFam" id="2.40.10.10:FF:000077">
    <property type="entry name" value="Predicted protein"/>
    <property type="match status" value="1"/>
</dbReference>
<dbReference type="Gene3D" id="2.40.10.10">
    <property type="entry name" value="Trypsin-like serine proteases"/>
    <property type="match status" value="1"/>
</dbReference>
<dbReference type="InterPro" id="IPR050430">
    <property type="entry name" value="Peptidase_S1"/>
</dbReference>
<dbReference type="InterPro" id="IPR009003">
    <property type="entry name" value="Peptidase_S1_PA"/>
</dbReference>
<dbReference type="InterPro" id="IPR043504">
    <property type="entry name" value="Peptidase_S1_PA_chymotrypsin"/>
</dbReference>
<dbReference type="InterPro" id="IPR001314">
    <property type="entry name" value="Peptidase_S1A"/>
</dbReference>
<dbReference type="InterPro" id="IPR001254">
    <property type="entry name" value="Trypsin_dom"/>
</dbReference>
<dbReference type="InterPro" id="IPR018114">
    <property type="entry name" value="TRYPSIN_HIS"/>
</dbReference>
<dbReference type="InterPro" id="IPR033116">
    <property type="entry name" value="TRYPSIN_SER"/>
</dbReference>
<dbReference type="PANTHER" id="PTHR24276:SF97">
    <property type="entry name" value="GH13245P2-RELATED"/>
    <property type="match status" value="1"/>
</dbReference>
<dbReference type="PANTHER" id="PTHR24276">
    <property type="entry name" value="POLYSERASE-RELATED"/>
    <property type="match status" value="1"/>
</dbReference>
<dbReference type="Pfam" id="PF00089">
    <property type="entry name" value="Trypsin"/>
    <property type="match status" value="1"/>
</dbReference>
<dbReference type="PRINTS" id="PR00722">
    <property type="entry name" value="CHYMOTRYPSIN"/>
</dbReference>
<dbReference type="SMART" id="SM00020">
    <property type="entry name" value="Tryp_SPc"/>
    <property type="match status" value="1"/>
</dbReference>
<dbReference type="SUPFAM" id="SSF50494">
    <property type="entry name" value="Trypsin-like serine proteases"/>
    <property type="match status" value="1"/>
</dbReference>
<dbReference type="PROSITE" id="PS50240">
    <property type="entry name" value="TRYPSIN_DOM"/>
    <property type="match status" value="1"/>
</dbReference>
<dbReference type="PROSITE" id="PS00134">
    <property type="entry name" value="TRYPSIN_HIS"/>
    <property type="match status" value="1"/>
</dbReference>
<dbReference type="PROSITE" id="PS00135">
    <property type="entry name" value="TRYPSIN_SER"/>
    <property type="match status" value="1"/>
</dbReference>
<name>TRY1_ANOGA</name>
<comment type="function">
    <text evidence="4 5">Major function may be to aid in digestion of the blood meal.</text>
</comment>
<comment type="catalytic activity">
    <reaction>
        <text>Preferential cleavage: Arg-|-Xaa, Lys-|-Xaa.</text>
        <dbReference type="EC" id="3.4.21.4"/>
    </reaction>
</comment>
<comment type="subcellular location">
    <subcellularLocation>
        <location evidence="4 5">Secreted</location>
    </subcellularLocation>
</comment>
<comment type="tissue specificity">
    <text evidence="4 5">Constitutively expressed at low level in the gut of adult females. Also expressed in the gut of male and female pupae.</text>
</comment>
<comment type="induction">
    <text evidence="5">By blood meal.</text>
</comment>
<comment type="similarity">
    <text evidence="3">Belongs to the peptidase S1 family.</text>
</comment>
<keyword id="KW-0222">Digestion</keyword>
<keyword id="KW-1015">Disulfide bond</keyword>
<keyword id="KW-0378">Hydrolase</keyword>
<keyword id="KW-0645">Protease</keyword>
<keyword id="KW-1185">Reference proteome</keyword>
<keyword id="KW-0964">Secreted</keyword>
<keyword id="KW-0720">Serine protease</keyword>
<keyword id="KW-0732">Signal</keyword>
<keyword id="KW-0865">Zymogen</keyword>
<proteinExistence type="evidence at transcript level"/>
<gene>
    <name type="primary">TRYP1</name>
    <name type="ORF">AGAP008296</name>
</gene>
<accession>P35035</accession>
<accession>Q7PN85</accession>
<protein>
    <recommendedName>
        <fullName>Trypsin-1</fullName>
        <ecNumber>3.4.21.4</ecNumber>
    </recommendedName>
    <alternativeName>
        <fullName>Antryp1</fullName>
    </alternativeName>
</protein>
<reference key="1">
    <citation type="journal article" date="1993" name="EMBO J.">
        <title>Members of a trypsin gene family in Anopheles gambiae are induced in the gut by blood meal.</title>
        <authorList>
            <person name="Mueller H.-M."/>
            <person name="Crampton J.M."/>
            <person name="della Torre A."/>
            <person name="Sinden R."/>
            <person name="Crisanti A."/>
        </authorList>
    </citation>
    <scope>NUCLEOTIDE SEQUENCE [MRNA]</scope>
    <scope>FUNCTION</scope>
    <scope>SUBCELLULAR LOCATION</scope>
    <scope>TISSUE SPECIFICITY</scope>
    <scope>INDUCTION</scope>
    <source>
        <strain>Suakoko</strain>
        <tissue>Midgut</tissue>
    </source>
</reference>
<reference key="2">
    <citation type="journal article" date="1995" name="Exp. Parasitol.">
        <title>Constitutive and blood meal-induced trypsin genes in Anopheles gambiae.</title>
        <authorList>
            <person name="Mueller H.-M."/>
            <person name="Catteruccia F."/>
            <person name="Vizioli J."/>
            <person name="della Torre A."/>
            <person name="Crisanti A."/>
        </authorList>
    </citation>
    <scope>NUCLEOTIDE SEQUENCE [GENOMIC DNA]</scope>
    <scope>FUNCTION</scope>
    <scope>SUBCELLULAR LOCATION</scope>
    <scope>TISSUE SPECIFICITY</scope>
    <source>
        <strain>Suakoko</strain>
        <tissue>Midgut</tissue>
    </source>
</reference>
<reference key="3">
    <citation type="journal article" date="2002" name="Science">
        <title>The genome sequence of the malaria mosquito Anopheles gambiae.</title>
        <authorList>
            <person name="Holt R.A."/>
            <person name="Subramanian G.M."/>
            <person name="Halpern A."/>
            <person name="Sutton G.G."/>
            <person name="Charlab R."/>
            <person name="Nusskern D.R."/>
            <person name="Wincker P."/>
            <person name="Clark A.G."/>
            <person name="Ribeiro J.M.C."/>
            <person name="Wides R."/>
            <person name="Salzberg S.L."/>
            <person name="Loftus B.J."/>
            <person name="Yandell M.D."/>
            <person name="Majoros W.H."/>
            <person name="Rusch D.B."/>
            <person name="Lai Z."/>
            <person name="Kraft C.L."/>
            <person name="Abril J.F."/>
            <person name="Anthouard V."/>
            <person name="Arensburger P."/>
            <person name="Atkinson P.W."/>
            <person name="Baden H."/>
            <person name="de Berardinis V."/>
            <person name="Baldwin D."/>
            <person name="Benes V."/>
            <person name="Biedler J."/>
            <person name="Blass C."/>
            <person name="Bolanos R."/>
            <person name="Boscus D."/>
            <person name="Barnstead M."/>
            <person name="Cai S."/>
            <person name="Center A."/>
            <person name="Chaturverdi K."/>
            <person name="Christophides G.K."/>
            <person name="Chrystal M.A.M."/>
            <person name="Clamp M."/>
            <person name="Cravchik A."/>
            <person name="Curwen V."/>
            <person name="Dana A."/>
            <person name="Delcher A."/>
            <person name="Dew I."/>
            <person name="Evans C.A."/>
            <person name="Flanigan M."/>
            <person name="Grundschober-Freimoser A."/>
            <person name="Friedli L."/>
            <person name="Gu Z."/>
            <person name="Guan P."/>
            <person name="Guigo R."/>
            <person name="Hillenmeyer M.E."/>
            <person name="Hladun S.L."/>
            <person name="Hogan J.R."/>
            <person name="Hong Y.S."/>
            <person name="Hoover J."/>
            <person name="Jaillon O."/>
            <person name="Ke Z."/>
            <person name="Kodira C.D."/>
            <person name="Kokoza E."/>
            <person name="Koutsos A."/>
            <person name="Letunic I."/>
            <person name="Levitsky A.A."/>
            <person name="Liang Y."/>
            <person name="Lin J.-J."/>
            <person name="Lobo N.F."/>
            <person name="Lopez J.R."/>
            <person name="Malek J.A."/>
            <person name="McIntosh T.C."/>
            <person name="Meister S."/>
            <person name="Miller J.R."/>
            <person name="Mobarry C."/>
            <person name="Mongin E."/>
            <person name="Murphy S.D."/>
            <person name="O'Brochta D.A."/>
            <person name="Pfannkoch C."/>
            <person name="Qi R."/>
            <person name="Regier M.A."/>
            <person name="Remington K."/>
            <person name="Shao H."/>
            <person name="Sharakhova M.V."/>
            <person name="Sitter C.D."/>
            <person name="Shetty J."/>
            <person name="Smith T.J."/>
            <person name="Strong R."/>
            <person name="Sun J."/>
            <person name="Thomasova D."/>
            <person name="Ton L.Q."/>
            <person name="Topalis P."/>
            <person name="Tu Z.J."/>
            <person name="Unger M.F."/>
            <person name="Walenz B."/>
            <person name="Wang A.H."/>
            <person name="Wang J."/>
            <person name="Wang M."/>
            <person name="Wang X."/>
            <person name="Woodford K.J."/>
            <person name="Wortman J.R."/>
            <person name="Wu M."/>
            <person name="Yao A."/>
            <person name="Zdobnov E.M."/>
            <person name="Zhang H."/>
            <person name="Zhao Q."/>
            <person name="Zhao S."/>
            <person name="Zhu S.C."/>
            <person name="Zhimulev I."/>
            <person name="Coluzzi M."/>
            <person name="della Torre A."/>
            <person name="Roth C.W."/>
            <person name="Louis C."/>
            <person name="Kalush F."/>
            <person name="Mural R.J."/>
            <person name="Myers E.W."/>
            <person name="Adams M.D."/>
            <person name="Smith H.O."/>
            <person name="Broder S."/>
            <person name="Gardner M.J."/>
            <person name="Fraser C.M."/>
            <person name="Birney E."/>
            <person name="Bork P."/>
            <person name="Brey P.T."/>
            <person name="Venter J.C."/>
            <person name="Weissenbach J."/>
            <person name="Kafatos F.C."/>
            <person name="Collins F.H."/>
            <person name="Hoffman S.L."/>
        </authorList>
    </citation>
    <scope>NUCLEOTIDE SEQUENCE [LARGE SCALE GENOMIC DNA]</scope>
    <source>
        <strain>PEST</strain>
    </source>
</reference>
<organism>
    <name type="scientific">Anopheles gambiae</name>
    <name type="common">African malaria mosquito</name>
    <dbReference type="NCBI Taxonomy" id="7165"/>
    <lineage>
        <taxon>Eukaryota</taxon>
        <taxon>Metazoa</taxon>
        <taxon>Ecdysozoa</taxon>
        <taxon>Arthropoda</taxon>
        <taxon>Hexapoda</taxon>
        <taxon>Insecta</taxon>
        <taxon>Pterygota</taxon>
        <taxon>Neoptera</taxon>
        <taxon>Endopterygota</taxon>
        <taxon>Diptera</taxon>
        <taxon>Nematocera</taxon>
        <taxon>Culicoidea</taxon>
        <taxon>Culicidae</taxon>
        <taxon>Anophelinae</taxon>
        <taxon>Anopheles</taxon>
    </lineage>
</organism>
<evidence type="ECO:0000250" key="1"/>
<evidence type="ECO:0000255" key="2"/>
<evidence type="ECO:0000255" key="3">
    <source>
        <dbReference type="PROSITE-ProRule" id="PRU00274"/>
    </source>
</evidence>
<evidence type="ECO:0000269" key="4">
    <source>
    </source>
</evidence>
<evidence type="ECO:0000269" key="5">
    <source>
    </source>
</evidence>
<evidence type="ECO:0000305" key="6"/>
<sequence>MSNKIAILLAVLVAVVACAEAQANQRHRLVRPSPSFSPRPRYAVGQRIVGGFEIDVSDAPYQVSLQYNKRHNCGGSVLSSKWVLTAAHCTAGASPSSLTVRLGTSRHASGGTVVRVARVVQHPKYDSSSIDFDYSLLELEDELTFSDSVQPVGLPKQDETVKDGTMTTVSGWGNTQSAAESNAVLRAANVPTVNQKECNKAYSEFGGVTDRMLCAGYQQGGKDACQGDSGGPLVADGKLVGVVSWGYGCAQAGYPGVYSRVAVVRDWVRENSGV</sequence>